<sequence length="116" mass="11784">MASMVMNVLCVAVACMVFSASYADAISCGQVTSGLVPCFGYLAAGGPVPPACCNGVRGLNNAAKTTPDRQTACGCLKGILAANTRINLNNANSLPGKCGISIGYKITPNIDCSKIH</sequence>
<name>NLTP_GERHY</name>
<accession>Q39794</accession>
<protein>
    <recommendedName>
        <fullName>Non-specific lipid-transfer protein</fullName>
        <shortName>LTP</shortName>
    </recommendedName>
</protein>
<reference key="1">
    <citation type="journal article" date="1994" name="Plant Mol. Biol.">
        <title>A corolla- and carpel-abundant, non-specific lipid transfer protein gene is expressed in the epidermis and parenchyma of Gerbera hybrida var. Regina (Compositae).</title>
        <authorList>
            <person name="Kotilainen M."/>
            <person name="Helariutta Y."/>
            <person name="Elomaa P."/>
            <person name="Paulin L."/>
        </authorList>
    </citation>
    <scope>NUCLEOTIDE SEQUENCE [MRNA]</scope>
    <source>
        <strain>cv. Regina</strain>
    </source>
</reference>
<evidence type="ECO:0000250" key="1"/>
<evidence type="ECO:0000255" key="2"/>
<evidence type="ECO:0000305" key="3"/>
<proteinExistence type="inferred from homology"/>
<dbReference type="EMBL" id="Z31588">
    <property type="protein sequence ID" value="CAA83459.1"/>
    <property type="molecule type" value="mRNA"/>
</dbReference>
<dbReference type="PIR" id="S50753">
    <property type="entry name" value="S50753"/>
</dbReference>
<dbReference type="SMR" id="Q39794"/>
<dbReference type="GO" id="GO:0008289">
    <property type="term" value="F:lipid binding"/>
    <property type="evidence" value="ECO:0007669"/>
    <property type="project" value="UniProtKB-KW"/>
</dbReference>
<dbReference type="GO" id="GO:0006869">
    <property type="term" value="P:lipid transport"/>
    <property type="evidence" value="ECO:0007669"/>
    <property type="project" value="InterPro"/>
</dbReference>
<dbReference type="CDD" id="cd01960">
    <property type="entry name" value="nsLTP1"/>
    <property type="match status" value="1"/>
</dbReference>
<dbReference type="Gene3D" id="1.10.110.10">
    <property type="entry name" value="Plant lipid-transfer and hydrophobic proteins"/>
    <property type="match status" value="1"/>
</dbReference>
<dbReference type="InterPro" id="IPR036312">
    <property type="entry name" value="Bifun_inhib/LTP/seed_sf"/>
</dbReference>
<dbReference type="InterPro" id="IPR016140">
    <property type="entry name" value="Bifunc_inhib/LTP/seed_store"/>
</dbReference>
<dbReference type="InterPro" id="IPR000528">
    <property type="entry name" value="Plant_nsLTP"/>
</dbReference>
<dbReference type="PANTHER" id="PTHR33076">
    <property type="entry name" value="NON-SPECIFIC LIPID-TRANSFER PROTEIN 2-RELATED"/>
    <property type="match status" value="1"/>
</dbReference>
<dbReference type="Pfam" id="PF00234">
    <property type="entry name" value="Tryp_alpha_amyl"/>
    <property type="match status" value="1"/>
</dbReference>
<dbReference type="PRINTS" id="PR00382">
    <property type="entry name" value="LIPIDTRNSFER"/>
</dbReference>
<dbReference type="SMART" id="SM00499">
    <property type="entry name" value="AAI"/>
    <property type="match status" value="1"/>
</dbReference>
<dbReference type="SUPFAM" id="SSF47699">
    <property type="entry name" value="Bifunctional inhibitor/lipid-transfer protein/seed storage 2S albumin"/>
    <property type="match status" value="1"/>
</dbReference>
<dbReference type="PROSITE" id="PS00597">
    <property type="entry name" value="PLANT_LTP"/>
    <property type="match status" value="1"/>
</dbReference>
<organism>
    <name type="scientific">Gerbera hybrida</name>
    <name type="common">Daisy</name>
    <dbReference type="NCBI Taxonomy" id="18101"/>
    <lineage>
        <taxon>Eukaryota</taxon>
        <taxon>Viridiplantae</taxon>
        <taxon>Streptophyta</taxon>
        <taxon>Embryophyta</taxon>
        <taxon>Tracheophyta</taxon>
        <taxon>Spermatophyta</taxon>
        <taxon>Magnoliopsida</taxon>
        <taxon>eudicotyledons</taxon>
        <taxon>Gunneridae</taxon>
        <taxon>Pentapetalae</taxon>
        <taxon>asterids</taxon>
        <taxon>campanulids</taxon>
        <taxon>Asterales</taxon>
        <taxon>Asteraceae</taxon>
        <taxon>Mutisioideae</taxon>
        <taxon>Mutisieae</taxon>
        <taxon>Gerbera</taxon>
    </lineage>
</organism>
<comment type="function">
    <text>Plant non-specific lipid-transfer proteins transfer phospholipids as well as galactolipids across membranes. May play a role in wax or cutin deposition in the cell walls of expanding epidermal cells and certain secretory tissues.</text>
</comment>
<comment type="similarity">
    <text evidence="3">Belongs to the plant LTP family.</text>
</comment>
<feature type="signal peptide" evidence="2">
    <location>
        <begin position="1"/>
        <end position="25"/>
    </location>
</feature>
<feature type="chain" id="PRO_0000018376" description="Non-specific lipid-transfer protein">
    <location>
        <begin position="26"/>
        <end position="116"/>
    </location>
</feature>
<feature type="disulfide bond" evidence="1">
    <location>
        <begin position="28"/>
        <end position="75"/>
    </location>
</feature>
<feature type="disulfide bond" evidence="1">
    <location>
        <begin position="38"/>
        <end position="52"/>
    </location>
</feature>
<feature type="disulfide bond" evidence="1">
    <location>
        <begin position="53"/>
        <end position="98"/>
    </location>
</feature>
<feature type="disulfide bond" evidence="1">
    <location>
        <begin position="73"/>
        <end position="112"/>
    </location>
</feature>
<keyword id="KW-1015">Disulfide bond</keyword>
<keyword id="KW-0446">Lipid-binding</keyword>
<keyword id="KW-0732">Signal</keyword>
<keyword id="KW-0813">Transport</keyword>